<feature type="chain" id="PRO_0000255801" description="Putative glutamate--cysteine ligase 2">
    <location>
        <begin position="1"/>
        <end position="372"/>
    </location>
</feature>
<accession>Q0TK91</accession>
<evidence type="ECO:0000255" key="1">
    <source>
        <dbReference type="HAMAP-Rule" id="MF_01609"/>
    </source>
</evidence>
<name>GCS2_ECOL5</name>
<gene>
    <name type="primary">ybdK</name>
    <name type="ordered locus">ECP_0612</name>
</gene>
<protein>
    <recommendedName>
        <fullName evidence="1">Putative glutamate--cysteine ligase 2</fullName>
        <ecNumber evidence="1">6.3.2.2</ecNumber>
    </recommendedName>
    <alternativeName>
        <fullName evidence="1">Gamma-glutamylcysteine synthetase 2</fullName>
        <shortName evidence="1">GCS 2</shortName>
        <shortName evidence="1">Gamma-GCS 2</shortName>
    </alternativeName>
</protein>
<proteinExistence type="inferred from homology"/>
<comment type="function">
    <text evidence="1">ATP-dependent carboxylate-amine ligase which exhibits weak glutamate--cysteine ligase activity.</text>
</comment>
<comment type="catalytic activity">
    <reaction evidence="1">
        <text>L-cysteine + L-glutamate + ATP = gamma-L-glutamyl-L-cysteine + ADP + phosphate + H(+)</text>
        <dbReference type="Rhea" id="RHEA:13285"/>
        <dbReference type="ChEBI" id="CHEBI:15378"/>
        <dbReference type="ChEBI" id="CHEBI:29985"/>
        <dbReference type="ChEBI" id="CHEBI:30616"/>
        <dbReference type="ChEBI" id="CHEBI:35235"/>
        <dbReference type="ChEBI" id="CHEBI:43474"/>
        <dbReference type="ChEBI" id="CHEBI:58173"/>
        <dbReference type="ChEBI" id="CHEBI:456216"/>
        <dbReference type="EC" id="6.3.2.2"/>
    </reaction>
</comment>
<comment type="subunit">
    <text evidence="1">Homodimer.</text>
</comment>
<comment type="similarity">
    <text evidence="1">Belongs to the glutamate--cysteine ligase type 2 family. YbdK subfamily.</text>
</comment>
<sequence>MPLPDFHVSEPFTLGIELEMQVVNPPGYDLSQDSSMLIDTVKNQITAGEVKHDITESMLELATDVCRDINQAAGQFSAMQKVVLQAAADHHLEICGGGTHPFQKWQRQEVCDNERYQRTLENFGYLIQQATVFGQHVHVGCASGDDAIYLLHGLSRFVPHFIALSAASPYMQGTDTRFASSRPNIFSAFPDNGPMPWVSNWQQFEALFRCLSYTTMIDSIKDLHWDIRPSPHFGTVEVRVMDTPLTLSHAVNMAGLIQATAHWLLTERPFKHQEKDYLMYKFNRFQACRYGLEGVITDPHTGDRRSLTEATLRLLEKIAPSAHKIGASSAIEALHRQVVSGLNEAQLMRDFVADGGSLIGLVKKHCEIWAGE</sequence>
<organism>
    <name type="scientific">Escherichia coli O6:K15:H31 (strain 536 / UPEC)</name>
    <dbReference type="NCBI Taxonomy" id="362663"/>
    <lineage>
        <taxon>Bacteria</taxon>
        <taxon>Pseudomonadati</taxon>
        <taxon>Pseudomonadota</taxon>
        <taxon>Gammaproteobacteria</taxon>
        <taxon>Enterobacterales</taxon>
        <taxon>Enterobacteriaceae</taxon>
        <taxon>Escherichia</taxon>
    </lineage>
</organism>
<reference key="1">
    <citation type="journal article" date="2006" name="Mol. Microbiol.">
        <title>Role of pathogenicity island-associated integrases in the genome plasticity of uropathogenic Escherichia coli strain 536.</title>
        <authorList>
            <person name="Hochhut B."/>
            <person name="Wilde C."/>
            <person name="Balling G."/>
            <person name="Middendorf B."/>
            <person name="Dobrindt U."/>
            <person name="Brzuszkiewicz E."/>
            <person name="Gottschalk G."/>
            <person name="Carniel E."/>
            <person name="Hacker J."/>
        </authorList>
    </citation>
    <scope>NUCLEOTIDE SEQUENCE [LARGE SCALE GENOMIC DNA]</scope>
    <source>
        <strain>536 / UPEC</strain>
    </source>
</reference>
<dbReference type="EC" id="6.3.2.2" evidence="1"/>
<dbReference type="EMBL" id="CP000247">
    <property type="protein sequence ID" value="ABG68640.1"/>
    <property type="molecule type" value="Genomic_DNA"/>
</dbReference>
<dbReference type="RefSeq" id="WP_001130668.1">
    <property type="nucleotide sequence ID" value="NC_008253.1"/>
</dbReference>
<dbReference type="SMR" id="Q0TK91"/>
<dbReference type="KEGG" id="ecp:ECP_0612"/>
<dbReference type="HOGENOM" id="CLU_044848_1_1_6"/>
<dbReference type="Proteomes" id="UP000009182">
    <property type="component" value="Chromosome"/>
</dbReference>
<dbReference type="GO" id="GO:0005524">
    <property type="term" value="F:ATP binding"/>
    <property type="evidence" value="ECO:0007669"/>
    <property type="project" value="UniProtKB-KW"/>
</dbReference>
<dbReference type="GO" id="GO:0004357">
    <property type="term" value="F:glutamate-cysteine ligase activity"/>
    <property type="evidence" value="ECO:0007669"/>
    <property type="project" value="UniProtKB-EC"/>
</dbReference>
<dbReference type="GO" id="GO:0042398">
    <property type="term" value="P:modified amino acid biosynthetic process"/>
    <property type="evidence" value="ECO:0007669"/>
    <property type="project" value="InterPro"/>
</dbReference>
<dbReference type="FunFam" id="3.30.590.20:FF:000002">
    <property type="entry name" value="Putative glutamate--cysteine ligase 2"/>
    <property type="match status" value="1"/>
</dbReference>
<dbReference type="Gene3D" id="3.30.590.20">
    <property type="match status" value="1"/>
</dbReference>
<dbReference type="HAMAP" id="MF_01609">
    <property type="entry name" value="Glu_cys_ligase_2"/>
    <property type="match status" value="1"/>
</dbReference>
<dbReference type="InterPro" id="IPR050141">
    <property type="entry name" value="GCL_type2/YbdK_subfam"/>
</dbReference>
<dbReference type="InterPro" id="IPR006336">
    <property type="entry name" value="GCS2"/>
</dbReference>
<dbReference type="InterPro" id="IPR014746">
    <property type="entry name" value="Gln_synth/guanido_kin_cat_dom"/>
</dbReference>
<dbReference type="InterPro" id="IPR011793">
    <property type="entry name" value="YbdK"/>
</dbReference>
<dbReference type="NCBIfam" id="TIGR02050">
    <property type="entry name" value="gshA_cyan_rel"/>
    <property type="match status" value="1"/>
</dbReference>
<dbReference type="NCBIfam" id="NF010040">
    <property type="entry name" value="PRK13516.1"/>
    <property type="match status" value="1"/>
</dbReference>
<dbReference type="PANTHER" id="PTHR36510">
    <property type="entry name" value="GLUTAMATE--CYSTEINE LIGASE 2-RELATED"/>
    <property type="match status" value="1"/>
</dbReference>
<dbReference type="PANTHER" id="PTHR36510:SF1">
    <property type="entry name" value="GLUTAMATE--CYSTEINE LIGASE 2-RELATED"/>
    <property type="match status" value="1"/>
</dbReference>
<dbReference type="Pfam" id="PF04107">
    <property type="entry name" value="GCS2"/>
    <property type="match status" value="1"/>
</dbReference>
<dbReference type="SUPFAM" id="SSF55931">
    <property type="entry name" value="Glutamine synthetase/guanido kinase"/>
    <property type="match status" value="1"/>
</dbReference>
<keyword id="KW-0067">ATP-binding</keyword>
<keyword id="KW-0436">Ligase</keyword>
<keyword id="KW-0547">Nucleotide-binding</keyword>